<gene>
    <name type="primary">ntrY</name>
    <name type="ordered locus">AZC_3084</name>
</gene>
<keyword id="KW-0067">ATP-binding</keyword>
<keyword id="KW-1003">Cell membrane</keyword>
<keyword id="KW-0418">Kinase</keyword>
<keyword id="KW-0472">Membrane</keyword>
<keyword id="KW-0535">Nitrogen fixation</keyword>
<keyword id="KW-0547">Nucleotide-binding</keyword>
<keyword id="KW-0597">Phosphoprotein</keyword>
<keyword id="KW-1185">Reference proteome</keyword>
<keyword id="KW-0808">Transferase</keyword>
<keyword id="KW-0812">Transmembrane</keyword>
<keyword id="KW-1133">Transmembrane helix</keyword>
<keyword id="KW-0902">Two-component regulatory system</keyword>
<organism>
    <name type="scientific">Azorhizobium caulinodans (strain ATCC 43989 / DSM 5975 / JCM 20966 / LMG 6465 / NBRC 14845 / NCIMB 13405 / ORS 571)</name>
    <dbReference type="NCBI Taxonomy" id="438753"/>
    <lineage>
        <taxon>Bacteria</taxon>
        <taxon>Pseudomonadati</taxon>
        <taxon>Pseudomonadota</taxon>
        <taxon>Alphaproteobacteria</taxon>
        <taxon>Hyphomicrobiales</taxon>
        <taxon>Xanthobacteraceae</taxon>
        <taxon>Azorhizobium</taxon>
    </lineage>
</organism>
<evidence type="ECO:0000255" key="1"/>
<evidence type="ECO:0000255" key="2">
    <source>
        <dbReference type="PROSITE-ProRule" id="PRU00102"/>
    </source>
</evidence>
<evidence type="ECO:0000255" key="3">
    <source>
        <dbReference type="PROSITE-ProRule" id="PRU00107"/>
    </source>
</evidence>
<evidence type="ECO:0000255" key="4">
    <source>
        <dbReference type="PROSITE-ProRule" id="PRU00140"/>
    </source>
</evidence>
<evidence type="ECO:0000256" key="5">
    <source>
        <dbReference type="SAM" id="MobiDB-lite"/>
    </source>
</evidence>
<sequence>MTQAAFDQASDNGPMTPSGSSFGLFAPAVVLLALISALATFLILMGLTPVVPTHQVVISVLLVNAAAVLILSAMVGREIWRIAKARARGRAAARLHIRIVGLFAVVSVVPAILVAVVASLTLDRGLDRWFSMRTQEIVASSVSVAQTYVREHALNIRGDILAMSADLTRLKSVYEGDRSRFNQILTAQAALRNLPGAMLIRRDLSVVERANVNIGREFIVPANLAIGDATPDQPVIYLPNDADYVAAVVPLKDYDDLYLYVARLIDPRVIGYLKTTQETLADYRSLEERRFGVQVAFALMYAVITLIVLLSAVWLGLNFSKWLVAPIRRLMSAADHVAEGNLDVRVPIYRAEGDLASLAETFNKMTHELRSQREAILTARDQIDSRRRFTEAVLSGVGAGVIGLDSQERITILNRSAERLLGLSEVEALHRHLAEVVPETAGLLEEAEHARQRSVQGNITLTRDGRERVFAVRVTTEQSPEAEHGWVVTLDDITELISAQRTSAWADVARRIAHEIKNPLTPIQLSAERLKRKFGRHVTQDREIFDQCTDTIIRQVGDIGRMVDEFSSFARMPKPVVDSQDMSEIIRQTVFLMRVGHPEVVFDSEVPPAMPARFDRRLVSQALTNILKNAAEAIEAVPPDVRGQGRIRVSANRVGEDLVIDIIDNGTGLPQESRNRLLEPYVTTREKGTGLGLAIVGKIMEEHGGGIELNDAPEGRGAWIRLTLKAEGPKAEPTDASTKATGAATPAAPAASAMARDAAADSAARGKNERT</sequence>
<proteinExistence type="inferred from homology"/>
<reference key="1">
    <citation type="journal article" date="1991" name="Mol. Gen. Genet.">
        <title>Characterization of a novel Azorhizobium caulinodans ORS571 two-component regulatory system, NtrY/NtrX, involved in nitrogen fixation and metabolism.</title>
        <authorList>
            <person name="Pawlowski K."/>
            <person name="Klosse U."/>
            <person name="de Bruijn F.J."/>
        </authorList>
    </citation>
    <scope>NUCLEOTIDE SEQUENCE [GENOMIC DNA]</scope>
</reference>
<reference key="2">
    <citation type="submission" date="2007-04" db="EMBL/GenBank/DDBJ databases">
        <title>Complete genome sequence of the nitrogen-fixing bacterium Azorhizobium caulinodans ORS571.</title>
        <authorList>
            <person name="Lee K.B."/>
            <person name="Backer P.D."/>
            <person name="Aono T."/>
            <person name="Liu C.T."/>
            <person name="Suzuki S."/>
            <person name="Suzuki T."/>
            <person name="Kaneko T."/>
            <person name="Yamada M."/>
            <person name="Tabata S."/>
            <person name="Kupfer D.M."/>
            <person name="Najar F.Z."/>
            <person name="Wiley G.B."/>
            <person name="Roe B."/>
            <person name="Binnewies T."/>
            <person name="Ussery D."/>
            <person name="Vereecke D."/>
            <person name="Gevers D."/>
            <person name="Holsters M."/>
            <person name="Oyaizu H."/>
        </authorList>
    </citation>
    <scope>NUCLEOTIDE SEQUENCE [LARGE SCALE GENOMIC DNA]</scope>
    <source>
        <strain>ATCC 43989 / DSM 5975 / JCM 20966 / LMG 6465 / NBRC 14845 / NCIMB 13405 / ORS 571</strain>
    </source>
</reference>
<name>NTRY_AZOC5</name>
<feature type="chain" id="PRO_0000074833" description="Nitrogen regulation protein NtrY">
    <location>
        <begin position="1"/>
        <end position="771"/>
    </location>
</feature>
<feature type="transmembrane region" description="Helical" evidence="1">
    <location>
        <begin position="22"/>
        <end position="46"/>
    </location>
</feature>
<feature type="transmembrane region" description="Helical" evidence="1">
    <location>
        <begin position="56"/>
        <end position="76"/>
    </location>
</feature>
<feature type="transmembrane region" description="Helical" evidence="1">
    <location>
        <begin position="99"/>
        <end position="122"/>
    </location>
</feature>
<feature type="transmembrane region" description="Helical" evidence="1">
    <location>
        <begin position="295"/>
        <end position="319"/>
    </location>
</feature>
<feature type="domain" description="HAMP" evidence="2">
    <location>
        <begin position="321"/>
        <end position="374"/>
    </location>
</feature>
<feature type="domain" description="PAS" evidence="4">
    <location>
        <begin position="386"/>
        <end position="458"/>
    </location>
</feature>
<feature type="domain" description="Histidine kinase" evidence="3">
    <location>
        <begin position="511"/>
        <end position="728"/>
    </location>
</feature>
<feature type="region of interest" description="Disordered" evidence="5">
    <location>
        <begin position="727"/>
        <end position="771"/>
    </location>
</feature>
<feature type="compositionally biased region" description="Low complexity" evidence="5">
    <location>
        <begin position="740"/>
        <end position="763"/>
    </location>
</feature>
<feature type="modified residue" description="Phosphohistidine; by autocatalysis" evidence="3">
    <location>
        <position position="514"/>
    </location>
</feature>
<protein>
    <recommendedName>
        <fullName>Nitrogen regulation protein NtrY</fullName>
        <ecNumber>2.7.13.3</ecNumber>
    </recommendedName>
</protein>
<comment type="function">
    <text>Member of the two-component regulatory system NtrY/NtrX involved in nitrogen level control. Probably activates NtrX by phosphorylation.</text>
</comment>
<comment type="catalytic activity">
    <reaction>
        <text>ATP + protein L-histidine = ADP + protein N-phospho-L-histidine.</text>
        <dbReference type="EC" id="2.7.13.3"/>
    </reaction>
</comment>
<comment type="subcellular location">
    <subcellularLocation>
        <location>Cell membrane</location>
        <topology>Multi-pass membrane protein</topology>
    </subcellularLocation>
</comment>
<accession>Q04850</accession>
<accession>A8IBK4</accession>
<dbReference type="EC" id="2.7.13.3"/>
<dbReference type="EMBL" id="X63841">
    <property type="protein sequence ID" value="CAA45330.1"/>
    <property type="molecule type" value="Genomic_DNA"/>
</dbReference>
<dbReference type="EMBL" id="AP009384">
    <property type="protein sequence ID" value="BAF89082.1"/>
    <property type="molecule type" value="Genomic_DNA"/>
</dbReference>
<dbReference type="PIR" id="S18624">
    <property type="entry name" value="S18624"/>
</dbReference>
<dbReference type="RefSeq" id="WP_012171608.1">
    <property type="nucleotide sequence ID" value="NC_009937.1"/>
</dbReference>
<dbReference type="SMR" id="Q04850"/>
<dbReference type="STRING" id="438753.AZC_3084"/>
<dbReference type="KEGG" id="azc:AZC_3084"/>
<dbReference type="eggNOG" id="COG5000">
    <property type="taxonomic scope" value="Bacteria"/>
</dbReference>
<dbReference type="HOGENOM" id="CLU_019564_1_0_5"/>
<dbReference type="BRENDA" id="2.7.13.3">
    <property type="organism ID" value="609"/>
</dbReference>
<dbReference type="PRO" id="PR:Q04850"/>
<dbReference type="Proteomes" id="UP000000270">
    <property type="component" value="Chromosome"/>
</dbReference>
<dbReference type="GO" id="GO:0005886">
    <property type="term" value="C:plasma membrane"/>
    <property type="evidence" value="ECO:0007669"/>
    <property type="project" value="UniProtKB-SubCell"/>
</dbReference>
<dbReference type="GO" id="GO:0005524">
    <property type="term" value="F:ATP binding"/>
    <property type="evidence" value="ECO:0007669"/>
    <property type="project" value="UniProtKB-KW"/>
</dbReference>
<dbReference type="GO" id="GO:0000155">
    <property type="term" value="F:phosphorelay sensor kinase activity"/>
    <property type="evidence" value="ECO:0007669"/>
    <property type="project" value="InterPro"/>
</dbReference>
<dbReference type="GO" id="GO:0009399">
    <property type="term" value="P:nitrogen fixation"/>
    <property type="evidence" value="ECO:0007669"/>
    <property type="project" value="UniProtKB-KW"/>
</dbReference>
<dbReference type="GO" id="GO:0006355">
    <property type="term" value="P:regulation of DNA-templated transcription"/>
    <property type="evidence" value="ECO:0007669"/>
    <property type="project" value="InterPro"/>
</dbReference>
<dbReference type="CDD" id="cd06225">
    <property type="entry name" value="HAMP"/>
    <property type="match status" value="1"/>
</dbReference>
<dbReference type="CDD" id="cd00082">
    <property type="entry name" value="HisKA"/>
    <property type="match status" value="1"/>
</dbReference>
<dbReference type="CDD" id="cd00130">
    <property type="entry name" value="PAS"/>
    <property type="match status" value="1"/>
</dbReference>
<dbReference type="FunFam" id="1.10.287.130:FF:000107">
    <property type="entry name" value="Sensor histidine kinase YycG"/>
    <property type="match status" value="1"/>
</dbReference>
<dbReference type="Gene3D" id="1.10.287.130">
    <property type="match status" value="1"/>
</dbReference>
<dbReference type="Gene3D" id="6.10.340.10">
    <property type="match status" value="1"/>
</dbReference>
<dbReference type="Gene3D" id="3.30.565.10">
    <property type="entry name" value="Histidine kinase-like ATPase, C-terminal domain"/>
    <property type="match status" value="1"/>
</dbReference>
<dbReference type="Gene3D" id="3.30.450.20">
    <property type="entry name" value="PAS domain"/>
    <property type="match status" value="1"/>
</dbReference>
<dbReference type="InterPro" id="IPR003660">
    <property type="entry name" value="HAMP_dom"/>
</dbReference>
<dbReference type="InterPro" id="IPR036890">
    <property type="entry name" value="HATPase_C_sf"/>
</dbReference>
<dbReference type="InterPro" id="IPR005467">
    <property type="entry name" value="His_kinase_dom"/>
</dbReference>
<dbReference type="InterPro" id="IPR003661">
    <property type="entry name" value="HisK_dim/P_dom"/>
</dbReference>
<dbReference type="InterPro" id="IPR036097">
    <property type="entry name" value="HisK_dim/P_sf"/>
</dbReference>
<dbReference type="InterPro" id="IPR017232">
    <property type="entry name" value="NtrY"/>
</dbReference>
<dbReference type="InterPro" id="IPR045671">
    <property type="entry name" value="NtrY-like_N"/>
</dbReference>
<dbReference type="InterPro" id="IPR000014">
    <property type="entry name" value="PAS"/>
</dbReference>
<dbReference type="InterPro" id="IPR035965">
    <property type="entry name" value="PAS-like_dom_sf"/>
</dbReference>
<dbReference type="InterPro" id="IPR013767">
    <property type="entry name" value="PAS_fold"/>
</dbReference>
<dbReference type="InterPro" id="IPR004358">
    <property type="entry name" value="Sig_transdc_His_kin-like_C"/>
</dbReference>
<dbReference type="NCBIfam" id="TIGR00229">
    <property type="entry name" value="sensory_box"/>
    <property type="match status" value="1"/>
</dbReference>
<dbReference type="PANTHER" id="PTHR43065:SF10">
    <property type="entry name" value="PEROXIDE STRESS-ACTIVATED HISTIDINE KINASE MAK3"/>
    <property type="match status" value="1"/>
</dbReference>
<dbReference type="PANTHER" id="PTHR43065">
    <property type="entry name" value="SENSOR HISTIDINE KINASE"/>
    <property type="match status" value="1"/>
</dbReference>
<dbReference type="Pfam" id="PF00672">
    <property type="entry name" value="HAMP"/>
    <property type="match status" value="1"/>
</dbReference>
<dbReference type="Pfam" id="PF02518">
    <property type="entry name" value="HATPase_c"/>
    <property type="match status" value="1"/>
</dbReference>
<dbReference type="Pfam" id="PF00512">
    <property type="entry name" value="HisKA"/>
    <property type="match status" value="1"/>
</dbReference>
<dbReference type="Pfam" id="PF19312">
    <property type="entry name" value="NtrY_N"/>
    <property type="match status" value="1"/>
</dbReference>
<dbReference type="Pfam" id="PF00989">
    <property type="entry name" value="PAS"/>
    <property type="match status" value="1"/>
</dbReference>
<dbReference type="PIRSF" id="PIRSF037532">
    <property type="entry name" value="STHK_NtrY"/>
    <property type="match status" value="1"/>
</dbReference>
<dbReference type="PRINTS" id="PR00344">
    <property type="entry name" value="BCTRLSENSOR"/>
</dbReference>
<dbReference type="SMART" id="SM00304">
    <property type="entry name" value="HAMP"/>
    <property type="match status" value="1"/>
</dbReference>
<dbReference type="SMART" id="SM00387">
    <property type="entry name" value="HATPase_c"/>
    <property type="match status" value="1"/>
</dbReference>
<dbReference type="SMART" id="SM00388">
    <property type="entry name" value="HisKA"/>
    <property type="match status" value="1"/>
</dbReference>
<dbReference type="SMART" id="SM00091">
    <property type="entry name" value="PAS"/>
    <property type="match status" value="1"/>
</dbReference>
<dbReference type="SUPFAM" id="SSF55874">
    <property type="entry name" value="ATPase domain of HSP90 chaperone/DNA topoisomerase II/histidine kinase"/>
    <property type="match status" value="1"/>
</dbReference>
<dbReference type="SUPFAM" id="SSF158472">
    <property type="entry name" value="HAMP domain-like"/>
    <property type="match status" value="1"/>
</dbReference>
<dbReference type="SUPFAM" id="SSF47384">
    <property type="entry name" value="Homodimeric domain of signal transducing histidine kinase"/>
    <property type="match status" value="1"/>
</dbReference>
<dbReference type="SUPFAM" id="SSF55785">
    <property type="entry name" value="PYP-like sensor domain (PAS domain)"/>
    <property type="match status" value="1"/>
</dbReference>
<dbReference type="PROSITE" id="PS50885">
    <property type="entry name" value="HAMP"/>
    <property type="match status" value="1"/>
</dbReference>
<dbReference type="PROSITE" id="PS50109">
    <property type="entry name" value="HIS_KIN"/>
    <property type="match status" value="1"/>
</dbReference>
<dbReference type="PROSITE" id="PS50112">
    <property type="entry name" value="PAS"/>
    <property type="match status" value="1"/>
</dbReference>